<organism>
    <name type="scientific">Brucella canis (strain ATCC 23365 / NCTC 10854 / RM-666)</name>
    <dbReference type="NCBI Taxonomy" id="483179"/>
    <lineage>
        <taxon>Bacteria</taxon>
        <taxon>Pseudomonadati</taxon>
        <taxon>Pseudomonadota</taxon>
        <taxon>Alphaproteobacteria</taxon>
        <taxon>Hyphomicrobiales</taxon>
        <taxon>Brucellaceae</taxon>
        <taxon>Brucella/Ochrobactrum group</taxon>
        <taxon>Brucella</taxon>
    </lineage>
</organism>
<keyword id="KW-0131">Cell cycle</keyword>
<keyword id="KW-0132">Cell division</keyword>
<keyword id="KW-1185">Reference proteome</keyword>
<evidence type="ECO:0000255" key="1">
    <source>
        <dbReference type="HAMAP-Rule" id="MF_00262"/>
    </source>
</evidence>
<name>MINE_BRUC2</name>
<protein>
    <recommendedName>
        <fullName evidence="1">Cell division topological specificity factor</fullName>
    </recommendedName>
</protein>
<gene>
    <name evidence="1" type="primary">minE</name>
    <name type="ordered locus">BCAN_B0324</name>
</gene>
<comment type="function">
    <text evidence="1">Prevents the cell division inhibition by proteins MinC and MinD at internal division sites while permitting inhibition at polar sites. This ensures cell division at the proper site by restricting the formation of a division septum at the midpoint of the long axis of the cell.</text>
</comment>
<comment type="similarity">
    <text evidence="1">Belongs to the MinE family.</text>
</comment>
<dbReference type="EMBL" id="CP000873">
    <property type="protein sequence ID" value="ABX63511.1"/>
    <property type="molecule type" value="Genomic_DNA"/>
</dbReference>
<dbReference type="RefSeq" id="WP_002966267.1">
    <property type="nucleotide sequence ID" value="NC_010104.1"/>
</dbReference>
<dbReference type="SMR" id="A9ME73"/>
<dbReference type="GeneID" id="97535514"/>
<dbReference type="KEGG" id="bcs:BCAN_B0324"/>
<dbReference type="HOGENOM" id="CLU_137929_2_0_5"/>
<dbReference type="Proteomes" id="UP000001385">
    <property type="component" value="Chromosome II"/>
</dbReference>
<dbReference type="GO" id="GO:0051301">
    <property type="term" value="P:cell division"/>
    <property type="evidence" value="ECO:0007669"/>
    <property type="project" value="UniProtKB-KW"/>
</dbReference>
<dbReference type="GO" id="GO:0032955">
    <property type="term" value="P:regulation of division septum assembly"/>
    <property type="evidence" value="ECO:0007669"/>
    <property type="project" value="InterPro"/>
</dbReference>
<dbReference type="Gene3D" id="3.30.1070.10">
    <property type="entry name" value="Cell division topological specificity factor MinE"/>
    <property type="match status" value="1"/>
</dbReference>
<dbReference type="HAMAP" id="MF_00262">
    <property type="entry name" value="MinE"/>
    <property type="match status" value="1"/>
</dbReference>
<dbReference type="InterPro" id="IPR005527">
    <property type="entry name" value="MinE"/>
</dbReference>
<dbReference type="InterPro" id="IPR036707">
    <property type="entry name" value="MinE_sf"/>
</dbReference>
<dbReference type="NCBIfam" id="TIGR01215">
    <property type="entry name" value="minE"/>
    <property type="match status" value="1"/>
</dbReference>
<dbReference type="NCBIfam" id="NF001422">
    <property type="entry name" value="PRK00296.1"/>
    <property type="match status" value="1"/>
</dbReference>
<dbReference type="Pfam" id="PF03776">
    <property type="entry name" value="MinE"/>
    <property type="match status" value="1"/>
</dbReference>
<dbReference type="SUPFAM" id="SSF55229">
    <property type="entry name" value="Cell division protein MinE topological specificity domain"/>
    <property type="match status" value="1"/>
</dbReference>
<reference key="1">
    <citation type="submission" date="2007-10" db="EMBL/GenBank/DDBJ databases">
        <title>Brucella canis ATCC 23365 whole genome shotgun sequencing project.</title>
        <authorList>
            <person name="Setubal J.C."/>
            <person name="Bowns C."/>
            <person name="Boyle S."/>
            <person name="Crasta O.R."/>
            <person name="Czar M.J."/>
            <person name="Dharmanolla C."/>
            <person name="Gillespie J.J."/>
            <person name="Kenyon R.W."/>
            <person name="Lu J."/>
            <person name="Mane S."/>
            <person name="Mohapatra S."/>
            <person name="Nagrani S."/>
            <person name="Purkayastha A."/>
            <person name="Rajasimha H.K."/>
            <person name="Shallom J.M."/>
            <person name="Shallom S."/>
            <person name="Shukla M."/>
            <person name="Snyder E.E."/>
            <person name="Sobral B.W."/>
            <person name="Wattam A.R."/>
            <person name="Will R."/>
            <person name="Williams K."/>
            <person name="Yoo H."/>
            <person name="Bruce D."/>
            <person name="Detter C."/>
            <person name="Munk C."/>
            <person name="Brettin T.S."/>
        </authorList>
    </citation>
    <scope>NUCLEOTIDE SEQUENCE [LARGE SCALE GENOMIC DNA]</scope>
    <source>
        <strain>ATCC 23365 / NCTC 10854 / RM-666</strain>
    </source>
</reference>
<proteinExistence type="inferred from homology"/>
<accession>A9ME73</accession>
<sequence>MSIFRFFTRQQASAPQARERLQVLLAHERASYGGQSDLVAVLREEILAVIAKHIKVDREKVSVKMDRGDQVSTLEVDIELPLTAKKGRAA</sequence>
<feature type="chain" id="PRO_1000078630" description="Cell division topological specificity factor">
    <location>
        <begin position="1"/>
        <end position="90"/>
    </location>
</feature>